<sequence length="940" mass="105668">MSDYKFTLNLPETEFPMRGNLANREPEMLERWTKDGLYQQIRDSRIGRTPFILHDGPPYANGSIHIGHSVNKILKDIIVKSKTMSGFDAPYVPGWDCHGLPIELKVEQKVGKPGQKITAAEFREECRKYAAEQVNGQREDFIRLGVLGDWQNPYLTMDFSTEANIVRSLSKVIESGHLHKGVKPVHWCTDCGSALAEAEVEYEDKTSPAIDVAFVAADSKAVAAKFGVSDYSHPVSMVIWTTTPWTLPANRALSLSPELDYSLVEFEKDGVTQALILAEVLVESCLTRYNVESHTVLGTTKGAALELVCFNHPFLDFDVPAILGDHVTTDAGTGIVHTAPGHGQDDFVVGQKYGLEVANPVGDNGVYKPDTKYFAGQHVFKANDNVVALLREKGALLNHVAYRHSYPHCWRHKTPIIFRATPQWFISMDNHGLRTQALKEIEQTQWIPDWGQSRIEKMVENRPDWCISRQRTWGVPITLFVNRETEELHPDSVSLMERVANRIEQQGIQAWWDLDAAELLGDEADQYRKVTDTLDVWYDSGSTFSSVVAARPEFHGHGVDLYLEGSDQHRGWFMSSLMISTAMNGKAPYKQVLTHGFTVDGKGRKMSKSIGNVIAPQTVTNKLGADILRLWVAATDYSGEMTVSDEILNRSADAYRRIRNTARFLLANLNGFDPAKDLVAVEDMVALDRWVVRRAAALQQEIIEAYDQYNFHIVTQKLMQFCSVELGSFYLDIIKDRQYTAKQEGHARRSCQSALFHIAEAMVRWIAPVLSFTADEVWQLLPGERDAYVFTQEWYQGLKSVTLATDLSDDYWQQLLAVRNEVNKVIEQARRDKRIGGSLEAEVTLFADATLTEQLTHIGDELRFVLLTSEAKVLPLADATTEAVETELASLKLVVASSTAEKCERCWHHREEVGSIEAHPTLCTRCVTNIEGDGEVRQFA</sequence>
<protein>
    <recommendedName>
        <fullName evidence="1">Isoleucine--tRNA ligase</fullName>
        <ecNumber evidence="1">6.1.1.5</ecNumber>
    </recommendedName>
    <alternativeName>
        <fullName evidence="1">Isoleucyl-tRNA synthetase</fullName>
        <shortName evidence="1">IleRS</shortName>
    </alternativeName>
</protein>
<feature type="chain" id="PRO_1000022123" description="Isoleucine--tRNA ligase">
    <location>
        <begin position="1"/>
        <end position="940"/>
    </location>
</feature>
<feature type="short sequence motif" description="'HIGH' region">
    <location>
        <begin position="58"/>
        <end position="68"/>
    </location>
</feature>
<feature type="short sequence motif" description="'KMSKS' region">
    <location>
        <begin position="605"/>
        <end position="609"/>
    </location>
</feature>
<feature type="binding site" evidence="1">
    <location>
        <position position="564"/>
    </location>
    <ligand>
        <name>L-isoleucyl-5'-AMP</name>
        <dbReference type="ChEBI" id="CHEBI:178002"/>
    </ligand>
</feature>
<feature type="binding site" evidence="1">
    <location>
        <position position="608"/>
    </location>
    <ligand>
        <name>ATP</name>
        <dbReference type="ChEBI" id="CHEBI:30616"/>
    </ligand>
</feature>
<feature type="binding site" evidence="1">
    <location>
        <position position="903"/>
    </location>
    <ligand>
        <name>Zn(2+)</name>
        <dbReference type="ChEBI" id="CHEBI:29105"/>
    </ligand>
</feature>
<feature type="binding site" evidence="1">
    <location>
        <position position="906"/>
    </location>
    <ligand>
        <name>Zn(2+)</name>
        <dbReference type="ChEBI" id="CHEBI:29105"/>
    </ligand>
</feature>
<feature type="binding site" evidence="1">
    <location>
        <position position="923"/>
    </location>
    <ligand>
        <name>Zn(2+)</name>
        <dbReference type="ChEBI" id="CHEBI:29105"/>
    </ligand>
</feature>
<feature type="binding site" evidence="1">
    <location>
        <position position="926"/>
    </location>
    <ligand>
        <name>Zn(2+)</name>
        <dbReference type="ChEBI" id="CHEBI:29105"/>
    </ligand>
</feature>
<name>SYI_SHESW</name>
<organism>
    <name type="scientific">Shewanella sp. (strain W3-18-1)</name>
    <dbReference type="NCBI Taxonomy" id="351745"/>
    <lineage>
        <taxon>Bacteria</taxon>
        <taxon>Pseudomonadati</taxon>
        <taxon>Pseudomonadota</taxon>
        <taxon>Gammaproteobacteria</taxon>
        <taxon>Alteromonadales</taxon>
        <taxon>Shewanellaceae</taxon>
        <taxon>Shewanella</taxon>
    </lineage>
</organism>
<reference key="1">
    <citation type="submission" date="2006-12" db="EMBL/GenBank/DDBJ databases">
        <title>Complete sequence of Shewanella sp. W3-18-1.</title>
        <authorList>
            <consortium name="US DOE Joint Genome Institute"/>
            <person name="Copeland A."/>
            <person name="Lucas S."/>
            <person name="Lapidus A."/>
            <person name="Barry K."/>
            <person name="Detter J.C."/>
            <person name="Glavina del Rio T."/>
            <person name="Hammon N."/>
            <person name="Israni S."/>
            <person name="Dalin E."/>
            <person name="Tice H."/>
            <person name="Pitluck S."/>
            <person name="Chain P."/>
            <person name="Malfatti S."/>
            <person name="Shin M."/>
            <person name="Vergez L."/>
            <person name="Schmutz J."/>
            <person name="Larimer F."/>
            <person name="Land M."/>
            <person name="Hauser L."/>
            <person name="Kyrpides N."/>
            <person name="Lykidis A."/>
            <person name="Tiedje J."/>
            <person name="Richardson P."/>
        </authorList>
    </citation>
    <scope>NUCLEOTIDE SEQUENCE [LARGE SCALE GENOMIC DNA]</scope>
    <source>
        <strain>W3-18-1</strain>
    </source>
</reference>
<accession>A1RMM6</accession>
<dbReference type="EC" id="6.1.1.5" evidence="1"/>
<dbReference type="EMBL" id="CP000503">
    <property type="protein sequence ID" value="ABM25921.1"/>
    <property type="molecule type" value="Genomic_DNA"/>
</dbReference>
<dbReference type="RefSeq" id="WP_011790372.1">
    <property type="nucleotide sequence ID" value="NC_008750.1"/>
</dbReference>
<dbReference type="SMR" id="A1RMM6"/>
<dbReference type="KEGG" id="shw:Sputw3181_3106"/>
<dbReference type="HOGENOM" id="CLU_001493_7_1_6"/>
<dbReference type="Proteomes" id="UP000002597">
    <property type="component" value="Chromosome"/>
</dbReference>
<dbReference type="GO" id="GO:0005829">
    <property type="term" value="C:cytosol"/>
    <property type="evidence" value="ECO:0007669"/>
    <property type="project" value="TreeGrafter"/>
</dbReference>
<dbReference type="GO" id="GO:0002161">
    <property type="term" value="F:aminoacyl-tRNA deacylase activity"/>
    <property type="evidence" value="ECO:0007669"/>
    <property type="project" value="InterPro"/>
</dbReference>
<dbReference type="GO" id="GO:0005524">
    <property type="term" value="F:ATP binding"/>
    <property type="evidence" value="ECO:0007669"/>
    <property type="project" value="UniProtKB-UniRule"/>
</dbReference>
<dbReference type="GO" id="GO:0004822">
    <property type="term" value="F:isoleucine-tRNA ligase activity"/>
    <property type="evidence" value="ECO:0007669"/>
    <property type="project" value="UniProtKB-UniRule"/>
</dbReference>
<dbReference type="GO" id="GO:0000049">
    <property type="term" value="F:tRNA binding"/>
    <property type="evidence" value="ECO:0007669"/>
    <property type="project" value="InterPro"/>
</dbReference>
<dbReference type="GO" id="GO:0008270">
    <property type="term" value="F:zinc ion binding"/>
    <property type="evidence" value="ECO:0007669"/>
    <property type="project" value="UniProtKB-UniRule"/>
</dbReference>
<dbReference type="GO" id="GO:0006428">
    <property type="term" value="P:isoleucyl-tRNA aminoacylation"/>
    <property type="evidence" value="ECO:0007669"/>
    <property type="project" value="UniProtKB-UniRule"/>
</dbReference>
<dbReference type="CDD" id="cd07960">
    <property type="entry name" value="Anticodon_Ia_Ile_BEm"/>
    <property type="match status" value="1"/>
</dbReference>
<dbReference type="CDD" id="cd00818">
    <property type="entry name" value="IleRS_core"/>
    <property type="match status" value="1"/>
</dbReference>
<dbReference type="FunFam" id="1.10.730.20:FF:000001">
    <property type="entry name" value="Isoleucine--tRNA ligase"/>
    <property type="match status" value="1"/>
</dbReference>
<dbReference type="FunFam" id="3.40.50.620:FF:000042">
    <property type="entry name" value="Isoleucine--tRNA ligase"/>
    <property type="match status" value="1"/>
</dbReference>
<dbReference type="FunFam" id="3.40.50.620:FF:000048">
    <property type="entry name" value="Isoleucine--tRNA ligase"/>
    <property type="match status" value="1"/>
</dbReference>
<dbReference type="FunFam" id="3.90.740.10:FF:000022">
    <property type="entry name" value="Isoleucine--tRNA ligase"/>
    <property type="match status" value="1"/>
</dbReference>
<dbReference type="Gene3D" id="1.10.730.20">
    <property type="match status" value="1"/>
</dbReference>
<dbReference type="Gene3D" id="3.40.50.620">
    <property type="entry name" value="HUPs"/>
    <property type="match status" value="2"/>
</dbReference>
<dbReference type="HAMAP" id="MF_02002">
    <property type="entry name" value="Ile_tRNA_synth_type1"/>
    <property type="match status" value="1"/>
</dbReference>
<dbReference type="InterPro" id="IPR001412">
    <property type="entry name" value="aa-tRNA-synth_I_CS"/>
</dbReference>
<dbReference type="InterPro" id="IPR002300">
    <property type="entry name" value="aa-tRNA-synth_Ia"/>
</dbReference>
<dbReference type="InterPro" id="IPR033708">
    <property type="entry name" value="Anticodon_Ile_BEm"/>
</dbReference>
<dbReference type="InterPro" id="IPR002301">
    <property type="entry name" value="Ile-tRNA-ligase"/>
</dbReference>
<dbReference type="InterPro" id="IPR023585">
    <property type="entry name" value="Ile-tRNA-ligase_type1"/>
</dbReference>
<dbReference type="InterPro" id="IPR050081">
    <property type="entry name" value="Ile-tRNA_ligase"/>
</dbReference>
<dbReference type="InterPro" id="IPR013155">
    <property type="entry name" value="M/V/L/I-tRNA-synth_anticd-bd"/>
</dbReference>
<dbReference type="InterPro" id="IPR014729">
    <property type="entry name" value="Rossmann-like_a/b/a_fold"/>
</dbReference>
<dbReference type="InterPro" id="IPR009080">
    <property type="entry name" value="tRNAsynth_Ia_anticodon-bd"/>
</dbReference>
<dbReference type="InterPro" id="IPR009008">
    <property type="entry name" value="Val/Leu/Ile-tRNA-synth_edit"/>
</dbReference>
<dbReference type="InterPro" id="IPR010663">
    <property type="entry name" value="Znf_FPG/IleRS"/>
</dbReference>
<dbReference type="NCBIfam" id="TIGR00392">
    <property type="entry name" value="ileS"/>
    <property type="match status" value="1"/>
</dbReference>
<dbReference type="PANTHER" id="PTHR42765:SF1">
    <property type="entry name" value="ISOLEUCINE--TRNA LIGASE, MITOCHONDRIAL"/>
    <property type="match status" value="1"/>
</dbReference>
<dbReference type="PANTHER" id="PTHR42765">
    <property type="entry name" value="SOLEUCYL-TRNA SYNTHETASE"/>
    <property type="match status" value="1"/>
</dbReference>
<dbReference type="Pfam" id="PF08264">
    <property type="entry name" value="Anticodon_1"/>
    <property type="match status" value="1"/>
</dbReference>
<dbReference type="Pfam" id="PF00133">
    <property type="entry name" value="tRNA-synt_1"/>
    <property type="match status" value="1"/>
</dbReference>
<dbReference type="Pfam" id="PF06827">
    <property type="entry name" value="zf-FPG_IleRS"/>
    <property type="match status" value="1"/>
</dbReference>
<dbReference type="PRINTS" id="PR00984">
    <property type="entry name" value="TRNASYNTHILE"/>
</dbReference>
<dbReference type="SUPFAM" id="SSF47323">
    <property type="entry name" value="Anticodon-binding domain of a subclass of class I aminoacyl-tRNA synthetases"/>
    <property type="match status" value="1"/>
</dbReference>
<dbReference type="SUPFAM" id="SSF52374">
    <property type="entry name" value="Nucleotidylyl transferase"/>
    <property type="match status" value="1"/>
</dbReference>
<dbReference type="SUPFAM" id="SSF50677">
    <property type="entry name" value="ValRS/IleRS/LeuRS editing domain"/>
    <property type="match status" value="1"/>
</dbReference>
<dbReference type="PROSITE" id="PS00178">
    <property type="entry name" value="AA_TRNA_LIGASE_I"/>
    <property type="match status" value="1"/>
</dbReference>
<gene>
    <name evidence="1" type="primary">ileS</name>
    <name type="ordered locus">Sputw3181_3106</name>
</gene>
<proteinExistence type="inferred from homology"/>
<evidence type="ECO:0000255" key="1">
    <source>
        <dbReference type="HAMAP-Rule" id="MF_02002"/>
    </source>
</evidence>
<comment type="function">
    <text evidence="1">Catalyzes the attachment of isoleucine to tRNA(Ile). As IleRS can inadvertently accommodate and process structurally similar amino acids such as valine, to avoid such errors it has two additional distinct tRNA(Ile)-dependent editing activities. One activity is designated as 'pretransfer' editing and involves the hydrolysis of activated Val-AMP. The other activity is designated 'posttransfer' editing and involves deacylation of mischarged Val-tRNA(Ile).</text>
</comment>
<comment type="catalytic activity">
    <reaction evidence="1">
        <text>tRNA(Ile) + L-isoleucine + ATP = L-isoleucyl-tRNA(Ile) + AMP + diphosphate</text>
        <dbReference type="Rhea" id="RHEA:11060"/>
        <dbReference type="Rhea" id="RHEA-COMP:9666"/>
        <dbReference type="Rhea" id="RHEA-COMP:9695"/>
        <dbReference type="ChEBI" id="CHEBI:30616"/>
        <dbReference type="ChEBI" id="CHEBI:33019"/>
        <dbReference type="ChEBI" id="CHEBI:58045"/>
        <dbReference type="ChEBI" id="CHEBI:78442"/>
        <dbReference type="ChEBI" id="CHEBI:78528"/>
        <dbReference type="ChEBI" id="CHEBI:456215"/>
        <dbReference type="EC" id="6.1.1.5"/>
    </reaction>
</comment>
<comment type="cofactor">
    <cofactor evidence="1">
        <name>Zn(2+)</name>
        <dbReference type="ChEBI" id="CHEBI:29105"/>
    </cofactor>
    <text evidence="1">Binds 1 zinc ion per subunit.</text>
</comment>
<comment type="subunit">
    <text evidence="1">Monomer.</text>
</comment>
<comment type="subcellular location">
    <subcellularLocation>
        <location evidence="1">Cytoplasm</location>
    </subcellularLocation>
</comment>
<comment type="domain">
    <text evidence="1">IleRS has two distinct active sites: one for aminoacylation and one for editing. The misactivated valine is translocated from the active site to the editing site, which sterically excludes the correctly activated isoleucine. The single editing site contains two valyl binding pockets, one specific for each substrate (Val-AMP or Val-tRNA(Ile)).</text>
</comment>
<comment type="similarity">
    <text evidence="1">Belongs to the class-I aminoacyl-tRNA synthetase family. IleS type 1 subfamily.</text>
</comment>
<keyword id="KW-0030">Aminoacyl-tRNA synthetase</keyword>
<keyword id="KW-0067">ATP-binding</keyword>
<keyword id="KW-0963">Cytoplasm</keyword>
<keyword id="KW-0436">Ligase</keyword>
<keyword id="KW-0479">Metal-binding</keyword>
<keyword id="KW-0547">Nucleotide-binding</keyword>
<keyword id="KW-0648">Protein biosynthesis</keyword>
<keyword id="KW-0862">Zinc</keyword>